<reference key="1">
    <citation type="journal article" date="2002" name="Nat. Genet.">
        <title>Genome sequence of the endocellular obligate symbiont of tsetse flies, Wigglesworthia glossinidia.</title>
        <authorList>
            <person name="Akman L."/>
            <person name="Yamashita A."/>
            <person name="Watanabe H."/>
            <person name="Oshima K."/>
            <person name="Shiba T."/>
            <person name="Hattori M."/>
            <person name="Aksoy S."/>
        </authorList>
    </citation>
    <scope>NUCLEOTIDE SEQUENCE [LARGE SCALE GENOMIC DNA]</scope>
</reference>
<accession>Q8D2R2</accession>
<comment type="function">
    <text evidence="1">Catalyzes the conversion of 1-hydroxy-2-methyl-2-(E)-butenyl 4-diphosphate (HMBPP) into a mixture of isopentenyl diphosphate (IPP) and dimethylallyl diphosphate (DMAPP). Acts in the terminal step of the DOXP/MEP pathway for isoprenoid precursor biosynthesis.</text>
</comment>
<comment type="catalytic activity">
    <reaction evidence="1">
        <text>isopentenyl diphosphate + 2 oxidized [2Fe-2S]-[ferredoxin] + H2O = (2E)-4-hydroxy-3-methylbut-2-enyl diphosphate + 2 reduced [2Fe-2S]-[ferredoxin] + 2 H(+)</text>
        <dbReference type="Rhea" id="RHEA:24488"/>
        <dbReference type="Rhea" id="RHEA-COMP:10000"/>
        <dbReference type="Rhea" id="RHEA-COMP:10001"/>
        <dbReference type="ChEBI" id="CHEBI:15377"/>
        <dbReference type="ChEBI" id="CHEBI:15378"/>
        <dbReference type="ChEBI" id="CHEBI:33737"/>
        <dbReference type="ChEBI" id="CHEBI:33738"/>
        <dbReference type="ChEBI" id="CHEBI:128753"/>
        <dbReference type="ChEBI" id="CHEBI:128769"/>
        <dbReference type="EC" id="1.17.7.4"/>
    </reaction>
</comment>
<comment type="catalytic activity">
    <reaction evidence="1">
        <text>dimethylallyl diphosphate + 2 oxidized [2Fe-2S]-[ferredoxin] + H2O = (2E)-4-hydroxy-3-methylbut-2-enyl diphosphate + 2 reduced [2Fe-2S]-[ferredoxin] + 2 H(+)</text>
        <dbReference type="Rhea" id="RHEA:24825"/>
        <dbReference type="Rhea" id="RHEA-COMP:10000"/>
        <dbReference type="Rhea" id="RHEA-COMP:10001"/>
        <dbReference type="ChEBI" id="CHEBI:15377"/>
        <dbReference type="ChEBI" id="CHEBI:15378"/>
        <dbReference type="ChEBI" id="CHEBI:33737"/>
        <dbReference type="ChEBI" id="CHEBI:33738"/>
        <dbReference type="ChEBI" id="CHEBI:57623"/>
        <dbReference type="ChEBI" id="CHEBI:128753"/>
        <dbReference type="EC" id="1.17.7.4"/>
    </reaction>
</comment>
<comment type="cofactor">
    <cofactor evidence="1">
        <name>[4Fe-4S] cluster</name>
        <dbReference type="ChEBI" id="CHEBI:49883"/>
    </cofactor>
    <text evidence="1">Binds 1 [4Fe-4S] cluster per subunit.</text>
</comment>
<comment type="pathway">
    <text evidence="1">Isoprenoid biosynthesis; dimethylallyl diphosphate biosynthesis; dimethylallyl diphosphate from (2E)-4-hydroxy-3-methylbutenyl diphosphate: step 1/1.</text>
</comment>
<comment type="pathway">
    <text evidence="1">Isoprenoid biosynthesis; isopentenyl diphosphate biosynthesis via DXP pathway; isopentenyl diphosphate from 1-deoxy-D-xylulose 5-phosphate: step 6/6.</text>
</comment>
<comment type="subunit">
    <text evidence="1">Homodimer.</text>
</comment>
<comment type="similarity">
    <text evidence="1">Belongs to the IspH family.</text>
</comment>
<organism>
    <name type="scientific">Wigglesworthia glossinidia brevipalpis</name>
    <dbReference type="NCBI Taxonomy" id="36870"/>
    <lineage>
        <taxon>Bacteria</taxon>
        <taxon>Pseudomonadati</taxon>
        <taxon>Pseudomonadota</taxon>
        <taxon>Gammaproteobacteria</taxon>
        <taxon>Enterobacterales</taxon>
        <taxon>Erwiniaceae</taxon>
        <taxon>Wigglesworthia</taxon>
    </lineage>
</organism>
<keyword id="KW-0004">4Fe-4S</keyword>
<keyword id="KW-0408">Iron</keyword>
<keyword id="KW-0411">Iron-sulfur</keyword>
<keyword id="KW-0414">Isoprene biosynthesis</keyword>
<keyword id="KW-0479">Metal-binding</keyword>
<keyword id="KW-0560">Oxidoreductase</keyword>
<keyword id="KW-1185">Reference proteome</keyword>
<proteinExistence type="inferred from homology"/>
<protein>
    <recommendedName>
        <fullName evidence="1">4-hydroxy-3-methylbut-2-enyl diphosphate reductase</fullName>
        <shortName evidence="1">HMBPP reductase</shortName>
        <ecNumber evidence="1">1.17.7.4</ecNumber>
    </recommendedName>
</protein>
<gene>
    <name evidence="1" type="primary">ispH</name>
    <name type="synonym">lytB</name>
    <name type="ordered locus">WIGBR2920</name>
</gene>
<feature type="chain" id="PRO_0000128894" description="4-hydroxy-3-methylbut-2-enyl diphosphate reductase">
    <location>
        <begin position="1"/>
        <end position="315"/>
    </location>
</feature>
<feature type="active site" description="Proton donor" evidence="1">
    <location>
        <position position="126"/>
    </location>
</feature>
<feature type="binding site" evidence="1">
    <location>
        <position position="12"/>
    </location>
    <ligand>
        <name>[4Fe-4S] cluster</name>
        <dbReference type="ChEBI" id="CHEBI:49883"/>
    </ligand>
</feature>
<feature type="binding site" evidence="1">
    <location>
        <position position="41"/>
    </location>
    <ligand>
        <name>(2E)-4-hydroxy-3-methylbut-2-enyl diphosphate</name>
        <dbReference type="ChEBI" id="CHEBI:128753"/>
    </ligand>
</feature>
<feature type="binding site" evidence="1">
    <location>
        <position position="41"/>
    </location>
    <ligand>
        <name>dimethylallyl diphosphate</name>
        <dbReference type="ChEBI" id="CHEBI:57623"/>
    </ligand>
</feature>
<feature type="binding site" evidence="1">
    <location>
        <position position="41"/>
    </location>
    <ligand>
        <name>isopentenyl diphosphate</name>
        <dbReference type="ChEBI" id="CHEBI:128769"/>
    </ligand>
</feature>
<feature type="binding site" evidence="1">
    <location>
        <position position="74"/>
    </location>
    <ligand>
        <name>(2E)-4-hydroxy-3-methylbut-2-enyl diphosphate</name>
        <dbReference type="ChEBI" id="CHEBI:128753"/>
    </ligand>
</feature>
<feature type="binding site" evidence="1">
    <location>
        <position position="74"/>
    </location>
    <ligand>
        <name>dimethylallyl diphosphate</name>
        <dbReference type="ChEBI" id="CHEBI:57623"/>
    </ligand>
</feature>
<feature type="binding site" evidence="1">
    <location>
        <position position="74"/>
    </location>
    <ligand>
        <name>isopentenyl diphosphate</name>
        <dbReference type="ChEBI" id="CHEBI:128769"/>
    </ligand>
</feature>
<feature type="binding site" evidence="1">
    <location>
        <position position="96"/>
    </location>
    <ligand>
        <name>[4Fe-4S] cluster</name>
        <dbReference type="ChEBI" id="CHEBI:49883"/>
    </ligand>
</feature>
<feature type="binding site" evidence="1">
    <location>
        <position position="124"/>
    </location>
    <ligand>
        <name>(2E)-4-hydroxy-3-methylbut-2-enyl diphosphate</name>
        <dbReference type="ChEBI" id="CHEBI:128753"/>
    </ligand>
</feature>
<feature type="binding site" evidence="1">
    <location>
        <position position="124"/>
    </location>
    <ligand>
        <name>dimethylallyl diphosphate</name>
        <dbReference type="ChEBI" id="CHEBI:57623"/>
    </ligand>
</feature>
<feature type="binding site" evidence="1">
    <location>
        <position position="124"/>
    </location>
    <ligand>
        <name>isopentenyl diphosphate</name>
        <dbReference type="ChEBI" id="CHEBI:128769"/>
    </ligand>
</feature>
<feature type="binding site" evidence="1">
    <location>
        <position position="167"/>
    </location>
    <ligand>
        <name>(2E)-4-hydroxy-3-methylbut-2-enyl diphosphate</name>
        <dbReference type="ChEBI" id="CHEBI:128753"/>
    </ligand>
</feature>
<feature type="binding site" evidence="1">
    <location>
        <position position="197"/>
    </location>
    <ligand>
        <name>[4Fe-4S] cluster</name>
        <dbReference type="ChEBI" id="CHEBI:49883"/>
    </ligand>
</feature>
<feature type="binding site" evidence="1">
    <location>
        <position position="225"/>
    </location>
    <ligand>
        <name>(2E)-4-hydroxy-3-methylbut-2-enyl diphosphate</name>
        <dbReference type="ChEBI" id="CHEBI:128753"/>
    </ligand>
</feature>
<feature type="binding site" evidence="1">
    <location>
        <position position="225"/>
    </location>
    <ligand>
        <name>dimethylallyl diphosphate</name>
        <dbReference type="ChEBI" id="CHEBI:57623"/>
    </ligand>
</feature>
<feature type="binding site" evidence="1">
    <location>
        <position position="225"/>
    </location>
    <ligand>
        <name>isopentenyl diphosphate</name>
        <dbReference type="ChEBI" id="CHEBI:128769"/>
    </ligand>
</feature>
<feature type="binding site" evidence="1">
    <location>
        <position position="226"/>
    </location>
    <ligand>
        <name>(2E)-4-hydroxy-3-methylbut-2-enyl diphosphate</name>
        <dbReference type="ChEBI" id="CHEBI:128753"/>
    </ligand>
</feature>
<feature type="binding site" evidence="1">
    <location>
        <position position="226"/>
    </location>
    <ligand>
        <name>dimethylallyl diphosphate</name>
        <dbReference type="ChEBI" id="CHEBI:57623"/>
    </ligand>
</feature>
<feature type="binding site" evidence="1">
    <location>
        <position position="226"/>
    </location>
    <ligand>
        <name>isopentenyl diphosphate</name>
        <dbReference type="ChEBI" id="CHEBI:128769"/>
    </ligand>
</feature>
<feature type="binding site" evidence="1">
    <location>
        <position position="227"/>
    </location>
    <ligand>
        <name>(2E)-4-hydroxy-3-methylbut-2-enyl diphosphate</name>
        <dbReference type="ChEBI" id="CHEBI:128753"/>
    </ligand>
</feature>
<feature type="binding site" evidence="1">
    <location>
        <position position="227"/>
    </location>
    <ligand>
        <name>dimethylallyl diphosphate</name>
        <dbReference type="ChEBI" id="CHEBI:57623"/>
    </ligand>
</feature>
<feature type="binding site" evidence="1">
    <location>
        <position position="227"/>
    </location>
    <ligand>
        <name>isopentenyl diphosphate</name>
        <dbReference type="ChEBI" id="CHEBI:128769"/>
    </ligand>
</feature>
<feature type="binding site" evidence="1">
    <location>
        <position position="269"/>
    </location>
    <ligand>
        <name>(2E)-4-hydroxy-3-methylbut-2-enyl diphosphate</name>
        <dbReference type="ChEBI" id="CHEBI:128753"/>
    </ligand>
</feature>
<feature type="binding site" evidence="1">
    <location>
        <position position="269"/>
    </location>
    <ligand>
        <name>dimethylallyl diphosphate</name>
        <dbReference type="ChEBI" id="CHEBI:57623"/>
    </ligand>
</feature>
<feature type="binding site" evidence="1">
    <location>
        <position position="269"/>
    </location>
    <ligand>
        <name>isopentenyl diphosphate</name>
        <dbReference type="ChEBI" id="CHEBI:128769"/>
    </ligand>
</feature>
<evidence type="ECO:0000255" key="1">
    <source>
        <dbReference type="HAMAP-Rule" id="MF_00191"/>
    </source>
</evidence>
<name>ISPH_WIGBR</name>
<sequence>MNIFLANPRGFCAGVDRAINIVKNAIEIYGPPIYVYNEVVHNKYVVNSLKKIGSIFVKKICDVPEKSILIFSAHGVSKSILKEANKRKLIIFDATCPLVSKVHHEIKRASKLRSEVIIIGHKNHPEIIGTIGQYNNPNKKVFVIQSIEEICKLKIKDPNNLFYFTQTTLSVDDTNKIIFAIKKKYPYIIEPRKKDICYATENRQKSIKKIIKLVDIIFIIGSKNSSNSNRLFEIANKSGKKSYLIDTYKEIKKSWLNGVNNIGITAGASAPEILVQQVVNYLKIFYKNSVNIYQVDGDIEKTKFMIPKKLILKIK</sequence>
<dbReference type="EC" id="1.17.7.4" evidence="1"/>
<dbReference type="EMBL" id="BA000021">
    <property type="protein sequence ID" value="BAC24438.1"/>
    <property type="molecule type" value="Genomic_DNA"/>
</dbReference>
<dbReference type="SMR" id="Q8D2R2"/>
<dbReference type="STRING" id="36870.gene:10368785"/>
<dbReference type="KEGG" id="wbr:lytB"/>
<dbReference type="eggNOG" id="COG0761">
    <property type="taxonomic scope" value="Bacteria"/>
</dbReference>
<dbReference type="HOGENOM" id="CLU_027486_1_0_6"/>
<dbReference type="OrthoDB" id="9804068at2"/>
<dbReference type="UniPathway" id="UPA00056">
    <property type="reaction ID" value="UER00097"/>
</dbReference>
<dbReference type="UniPathway" id="UPA00059">
    <property type="reaction ID" value="UER00105"/>
</dbReference>
<dbReference type="Proteomes" id="UP000000562">
    <property type="component" value="Chromosome"/>
</dbReference>
<dbReference type="GO" id="GO:0051539">
    <property type="term" value="F:4 iron, 4 sulfur cluster binding"/>
    <property type="evidence" value="ECO:0007669"/>
    <property type="project" value="UniProtKB-UniRule"/>
</dbReference>
<dbReference type="GO" id="GO:0051745">
    <property type="term" value="F:4-hydroxy-3-methylbut-2-enyl diphosphate reductase activity"/>
    <property type="evidence" value="ECO:0007669"/>
    <property type="project" value="UniProtKB-UniRule"/>
</dbReference>
<dbReference type="GO" id="GO:0046872">
    <property type="term" value="F:metal ion binding"/>
    <property type="evidence" value="ECO:0007669"/>
    <property type="project" value="UniProtKB-KW"/>
</dbReference>
<dbReference type="GO" id="GO:0050992">
    <property type="term" value="P:dimethylallyl diphosphate biosynthetic process"/>
    <property type="evidence" value="ECO:0007669"/>
    <property type="project" value="UniProtKB-UniRule"/>
</dbReference>
<dbReference type="GO" id="GO:0019288">
    <property type="term" value="P:isopentenyl diphosphate biosynthetic process, methylerythritol 4-phosphate pathway"/>
    <property type="evidence" value="ECO:0007669"/>
    <property type="project" value="UniProtKB-UniRule"/>
</dbReference>
<dbReference type="GO" id="GO:0016114">
    <property type="term" value="P:terpenoid biosynthetic process"/>
    <property type="evidence" value="ECO:0007669"/>
    <property type="project" value="UniProtKB-UniRule"/>
</dbReference>
<dbReference type="CDD" id="cd13944">
    <property type="entry name" value="lytB_ispH"/>
    <property type="match status" value="1"/>
</dbReference>
<dbReference type="Gene3D" id="3.40.50.11270">
    <property type="match status" value="1"/>
</dbReference>
<dbReference type="Gene3D" id="3.40.1010.20">
    <property type="entry name" value="4-hydroxy-3-methylbut-2-enyl diphosphate reductase, catalytic domain"/>
    <property type="match status" value="2"/>
</dbReference>
<dbReference type="HAMAP" id="MF_00191">
    <property type="entry name" value="IspH"/>
    <property type="match status" value="1"/>
</dbReference>
<dbReference type="InterPro" id="IPR003451">
    <property type="entry name" value="LytB/IspH"/>
</dbReference>
<dbReference type="NCBIfam" id="TIGR00216">
    <property type="entry name" value="ispH_lytB"/>
    <property type="match status" value="1"/>
</dbReference>
<dbReference type="NCBIfam" id="NF002188">
    <property type="entry name" value="PRK01045.1-2"/>
    <property type="match status" value="1"/>
</dbReference>
<dbReference type="NCBIfam" id="NF002190">
    <property type="entry name" value="PRK01045.1-4"/>
    <property type="match status" value="1"/>
</dbReference>
<dbReference type="PANTHER" id="PTHR30426">
    <property type="entry name" value="4-HYDROXY-3-METHYLBUT-2-ENYL DIPHOSPHATE REDUCTASE"/>
    <property type="match status" value="1"/>
</dbReference>
<dbReference type="PANTHER" id="PTHR30426:SF0">
    <property type="entry name" value="4-HYDROXY-3-METHYLBUT-2-ENYL DIPHOSPHATE REDUCTASE"/>
    <property type="match status" value="1"/>
</dbReference>
<dbReference type="Pfam" id="PF02401">
    <property type="entry name" value="LYTB"/>
    <property type="match status" value="1"/>
</dbReference>